<name>LPXK_CHLCH</name>
<reference key="1">
    <citation type="submission" date="2005-08" db="EMBL/GenBank/DDBJ databases">
        <title>Complete sequence of Chlorobium chlorochromatii CaD3.</title>
        <authorList>
            <consortium name="US DOE Joint Genome Institute"/>
            <person name="Copeland A."/>
            <person name="Lucas S."/>
            <person name="Lapidus A."/>
            <person name="Barry K."/>
            <person name="Detter J.C."/>
            <person name="Glavina T."/>
            <person name="Hammon N."/>
            <person name="Israni S."/>
            <person name="Pitluck S."/>
            <person name="Bryant D."/>
            <person name="Schmutz J."/>
            <person name="Larimer F."/>
            <person name="Land M."/>
            <person name="Kyrpides N."/>
            <person name="Ivanova N."/>
            <person name="Richardson P."/>
        </authorList>
    </citation>
    <scope>NUCLEOTIDE SEQUENCE [LARGE SCALE GENOMIC DNA]</scope>
    <source>
        <strain>CaD3</strain>
    </source>
</reference>
<protein>
    <recommendedName>
        <fullName evidence="1">Tetraacyldisaccharide 4'-kinase</fullName>
        <ecNumber evidence="1">2.7.1.130</ecNumber>
    </recommendedName>
    <alternativeName>
        <fullName evidence="1">Lipid A 4'-kinase</fullName>
    </alternativeName>
</protein>
<accession>Q3AU78</accession>
<comment type="function">
    <text evidence="1">Transfers the gamma-phosphate of ATP to the 4'-position of a tetraacyldisaccharide 1-phosphate intermediate (termed DS-1-P) to form tetraacyldisaccharide 1,4'-bis-phosphate (lipid IVA).</text>
</comment>
<comment type="catalytic activity">
    <reaction evidence="1">
        <text>a lipid A disaccharide + ATP = a lipid IVA + ADP + H(+)</text>
        <dbReference type="Rhea" id="RHEA:67840"/>
        <dbReference type="ChEBI" id="CHEBI:15378"/>
        <dbReference type="ChEBI" id="CHEBI:30616"/>
        <dbReference type="ChEBI" id="CHEBI:176343"/>
        <dbReference type="ChEBI" id="CHEBI:176425"/>
        <dbReference type="ChEBI" id="CHEBI:456216"/>
        <dbReference type="EC" id="2.7.1.130"/>
    </reaction>
</comment>
<comment type="pathway">
    <text evidence="1">Glycolipid biosynthesis; lipid IV(A) biosynthesis; lipid IV(A) from (3R)-3-hydroxytetradecanoyl-[acyl-carrier-protein] and UDP-N-acetyl-alpha-D-glucosamine: step 6/6.</text>
</comment>
<comment type="similarity">
    <text evidence="1">Belongs to the LpxK family.</text>
</comment>
<organism>
    <name type="scientific">Chlorobium chlorochromatii (strain CaD3)</name>
    <dbReference type="NCBI Taxonomy" id="340177"/>
    <lineage>
        <taxon>Bacteria</taxon>
        <taxon>Pseudomonadati</taxon>
        <taxon>Chlorobiota</taxon>
        <taxon>Chlorobiia</taxon>
        <taxon>Chlorobiales</taxon>
        <taxon>Chlorobiaceae</taxon>
        <taxon>Chlorobium/Pelodictyon group</taxon>
        <taxon>Chlorobium</taxon>
    </lineage>
</organism>
<evidence type="ECO:0000255" key="1">
    <source>
        <dbReference type="HAMAP-Rule" id="MF_00409"/>
    </source>
</evidence>
<keyword id="KW-0067">ATP-binding</keyword>
<keyword id="KW-0418">Kinase</keyword>
<keyword id="KW-0441">Lipid A biosynthesis</keyword>
<keyword id="KW-0444">Lipid biosynthesis</keyword>
<keyword id="KW-0443">Lipid metabolism</keyword>
<keyword id="KW-0547">Nucleotide-binding</keyword>
<keyword id="KW-0808">Transferase</keyword>
<sequence length="371" mass="41309">MSNPLRLAFRPFALLYEAIVQTRNQLFNRAVLRAWESPMPVVSVGNLSAGGTGKTPMVDWVVKYYLSIGFKPAIISRGYKRQSKGVQLVSDGNNVLLSSREAGDETAMLAWNNPDAIVVVASKRKQGVKLITKRFAQRLPSVIILDDAFQHRQIARSLDIVLVNAEEPFVEAAMLPEGRLREPKKNLLRADVVVLNKITDLEAATPSIKALEEMGRPLVKARLSTGELICFSGDATTLDEPATAHHLNAFAFAGIAKPESFVTSLQHEGVNVGATRFVRDHAPYSAKMLRAIRRQAEEQGLCLITTEKDYFRLLGQPELLSIITALPCYYLKIAPDIFDGKALLQEKLNAVVHYVPKPEPPKKIEEPYRRW</sequence>
<feature type="chain" id="PRO_0000340827" description="Tetraacyldisaccharide 4'-kinase">
    <location>
        <begin position="1"/>
        <end position="371"/>
    </location>
</feature>
<feature type="binding site" evidence="1">
    <location>
        <begin position="48"/>
        <end position="55"/>
    </location>
    <ligand>
        <name>ATP</name>
        <dbReference type="ChEBI" id="CHEBI:30616"/>
    </ligand>
</feature>
<proteinExistence type="inferred from homology"/>
<dbReference type="EC" id="2.7.1.130" evidence="1"/>
<dbReference type="EMBL" id="CP000108">
    <property type="protein sequence ID" value="ABB27447.1"/>
    <property type="molecule type" value="Genomic_DNA"/>
</dbReference>
<dbReference type="SMR" id="Q3AU78"/>
<dbReference type="STRING" id="340177.Cag_0169"/>
<dbReference type="KEGG" id="cch:Cag_0169"/>
<dbReference type="eggNOG" id="COG1663">
    <property type="taxonomic scope" value="Bacteria"/>
</dbReference>
<dbReference type="HOGENOM" id="CLU_038816_6_0_10"/>
<dbReference type="OrthoDB" id="9766423at2"/>
<dbReference type="UniPathway" id="UPA00359">
    <property type="reaction ID" value="UER00482"/>
</dbReference>
<dbReference type="GO" id="GO:0005886">
    <property type="term" value="C:plasma membrane"/>
    <property type="evidence" value="ECO:0007669"/>
    <property type="project" value="TreeGrafter"/>
</dbReference>
<dbReference type="GO" id="GO:0005524">
    <property type="term" value="F:ATP binding"/>
    <property type="evidence" value="ECO:0007669"/>
    <property type="project" value="UniProtKB-UniRule"/>
</dbReference>
<dbReference type="GO" id="GO:0009029">
    <property type="term" value="F:tetraacyldisaccharide 4'-kinase activity"/>
    <property type="evidence" value="ECO:0007669"/>
    <property type="project" value="UniProtKB-UniRule"/>
</dbReference>
<dbReference type="GO" id="GO:0009245">
    <property type="term" value="P:lipid A biosynthetic process"/>
    <property type="evidence" value="ECO:0007669"/>
    <property type="project" value="UniProtKB-UniRule"/>
</dbReference>
<dbReference type="GO" id="GO:0009244">
    <property type="term" value="P:lipopolysaccharide core region biosynthetic process"/>
    <property type="evidence" value="ECO:0007669"/>
    <property type="project" value="TreeGrafter"/>
</dbReference>
<dbReference type="HAMAP" id="MF_00409">
    <property type="entry name" value="LpxK"/>
    <property type="match status" value="1"/>
</dbReference>
<dbReference type="InterPro" id="IPR003758">
    <property type="entry name" value="LpxK"/>
</dbReference>
<dbReference type="InterPro" id="IPR027417">
    <property type="entry name" value="P-loop_NTPase"/>
</dbReference>
<dbReference type="NCBIfam" id="TIGR00682">
    <property type="entry name" value="lpxK"/>
    <property type="match status" value="1"/>
</dbReference>
<dbReference type="PANTHER" id="PTHR42724">
    <property type="entry name" value="TETRAACYLDISACCHARIDE 4'-KINASE"/>
    <property type="match status" value="1"/>
</dbReference>
<dbReference type="PANTHER" id="PTHR42724:SF1">
    <property type="entry name" value="TETRAACYLDISACCHARIDE 4'-KINASE, MITOCHONDRIAL-RELATED"/>
    <property type="match status" value="1"/>
</dbReference>
<dbReference type="Pfam" id="PF02606">
    <property type="entry name" value="LpxK"/>
    <property type="match status" value="1"/>
</dbReference>
<dbReference type="SUPFAM" id="SSF52540">
    <property type="entry name" value="P-loop containing nucleoside triphosphate hydrolases"/>
    <property type="match status" value="1"/>
</dbReference>
<gene>
    <name evidence="1" type="primary">lpxK</name>
    <name type="ordered locus">Cag_0169</name>
</gene>